<sequence>MISAISSPWLTQLSHFCDVAAFTANSLSSLNASGGYHLSPSPGDPYSQHEPHYEPCSASQHSYSFGHACPEPESGASSSSCASSTPGSGSTGSSSGNKAPVKKNPKVANITVQLEMKALWDEFNQLGTEMIVTKAGRRMFPTFQVKIFGMDPMADYMLLMDFVPVDDKRYRYAFHSSSWLVAGKADPATPGRVHYHPDSPAKGAQWMKQIVSFDKLKLTNNLLDDNGHIILNSMHRYQPRFHVVYVDPRKDSEKYAEENFKTFVFEETRFTAVTAYQNHRITQLKIASNPFAKGFRDCDPEDWPRNHRPGSLPLMNAFARSRNPVSSPPQNGSDKDGDGRREYERDASVTPLHGDAAHQQLMSRVLSPSLPVPGGLVPLSTGRPSPPHELRLDPHSQGSEPLHHHPYKYPTSYDHYLGAKTRPAPYPLPSIRGHGYHHHPMNPAAANMYSGAGAPGGYEYGPR</sequence>
<gene>
    <name type="primary">tbx1-b</name>
</gene>
<protein>
    <recommendedName>
        <fullName>T-box transcription factor TBX1-B</fullName>
        <shortName>T-box protein 1-B</shortName>
    </recommendedName>
</protein>
<keyword id="KW-0010">Activator</keyword>
<keyword id="KW-0217">Developmental protein</keyword>
<keyword id="KW-0238">DNA-binding</keyword>
<keyword id="KW-0539">Nucleus</keyword>
<keyword id="KW-1185">Reference proteome</keyword>
<keyword id="KW-0804">Transcription</keyword>
<keyword id="KW-0805">Transcription regulation</keyword>
<dbReference type="EMBL" id="BC108602">
    <property type="protein sequence ID" value="AAI08603.1"/>
    <property type="molecule type" value="mRNA"/>
</dbReference>
<dbReference type="SMR" id="Q32NI9"/>
<dbReference type="DNASU" id="735223"/>
<dbReference type="GeneID" id="735223"/>
<dbReference type="KEGG" id="xla:735223"/>
<dbReference type="AGR" id="Xenbase:XB-GENE-478088"/>
<dbReference type="CTD" id="735223"/>
<dbReference type="Xenbase" id="XB-GENE-478088">
    <property type="gene designation" value="tbx1.L"/>
</dbReference>
<dbReference type="OMA" id="GNDSHAG"/>
<dbReference type="OrthoDB" id="7442607at2759"/>
<dbReference type="Proteomes" id="UP000186698">
    <property type="component" value="Chromosome 1L"/>
</dbReference>
<dbReference type="Bgee" id="735223">
    <property type="expression patterns" value="Expressed in internal ear and 16 other cell types or tissues"/>
</dbReference>
<dbReference type="GO" id="GO:0000785">
    <property type="term" value="C:chromatin"/>
    <property type="evidence" value="ECO:0000318"/>
    <property type="project" value="GO_Central"/>
</dbReference>
<dbReference type="GO" id="GO:0005634">
    <property type="term" value="C:nucleus"/>
    <property type="evidence" value="ECO:0000318"/>
    <property type="project" value="GO_Central"/>
</dbReference>
<dbReference type="GO" id="GO:0003700">
    <property type="term" value="F:DNA-binding transcription factor activity"/>
    <property type="evidence" value="ECO:0000250"/>
    <property type="project" value="UniProtKB"/>
</dbReference>
<dbReference type="GO" id="GO:0000981">
    <property type="term" value="F:DNA-binding transcription factor activity, RNA polymerase II-specific"/>
    <property type="evidence" value="ECO:0000318"/>
    <property type="project" value="GO_Central"/>
</dbReference>
<dbReference type="GO" id="GO:0000978">
    <property type="term" value="F:RNA polymerase II cis-regulatory region sequence-specific DNA binding"/>
    <property type="evidence" value="ECO:0000318"/>
    <property type="project" value="GO_Central"/>
</dbReference>
<dbReference type="GO" id="GO:0001708">
    <property type="term" value="P:cell fate specification"/>
    <property type="evidence" value="ECO:0000318"/>
    <property type="project" value="GO_Central"/>
</dbReference>
<dbReference type="GO" id="GO:0071300">
    <property type="term" value="P:cellular response to retinoic acid"/>
    <property type="evidence" value="ECO:0000250"/>
    <property type="project" value="UniProtKB"/>
</dbReference>
<dbReference type="GO" id="GO:0060788">
    <property type="term" value="P:ectodermal placode formation"/>
    <property type="evidence" value="ECO:0000250"/>
    <property type="project" value="UniProtKB"/>
</dbReference>
<dbReference type="GO" id="GO:0045944">
    <property type="term" value="P:positive regulation of transcription by RNA polymerase II"/>
    <property type="evidence" value="ECO:0000250"/>
    <property type="project" value="UniProtKB"/>
</dbReference>
<dbReference type="GO" id="GO:0050793">
    <property type="term" value="P:regulation of developmental process"/>
    <property type="evidence" value="ECO:0000250"/>
    <property type="project" value="UniProtKB"/>
</dbReference>
<dbReference type="GO" id="GO:0006357">
    <property type="term" value="P:regulation of transcription by RNA polymerase II"/>
    <property type="evidence" value="ECO:0000318"/>
    <property type="project" value="GO_Central"/>
</dbReference>
<dbReference type="CDD" id="cd20187">
    <property type="entry name" value="T-box_TBX1_10-like"/>
    <property type="match status" value="1"/>
</dbReference>
<dbReference type="FunFam" id="2.60.40.820:FF:000006">
    <property type="entry name" value="T-box transcription factor"/>
    <property type="match status" value="1"/>
</dbReference>
<dbReference type="Gene3D" id="2.60.40.820">
    <property type="entry name" value="Transcription factor, T-box"/>
    <property type="match status" value="1"/>
</dbReference>
<dbReference type="InterPro" id="IPR008967">
    <property type="entry name" value="p53-like_TF_DNA-bd_sf"/>
</dbReference>
<dbReference type="InterPro" id="IPR046360">
    <property type="entry name" value="T-box_DNA-bd"/>
</dbReference>
<dbReference type="InterPro" id="IPR036960">
    <property type="entry name" value="T-box_sf"/>
</dbReference>
<dbReference type="InterPro" id="IPR001699">
    <property type="entry name" value="TF_T-box"/>
</dbReference>
<dbReference type="InterPro" id="IPR018186">
    <property type="entry name" value="TF_T-box_CS"/>
</dbReference>
<dbReference type="PANTHER" id="PTHR11267">
    <property type="entry name" value="T-BOX PROTEIN-RELATED"/>
    <property type="match status" value="1"/>
</dbReference>
<dbReference type="PANTHER" id="PTHR11267:SF104">
    <property type="entry name" value="T-BOX TRANSCRIPTION FACTOR TBX1"/>
    <property type="match status" value="1"/>
</dbReference>
<dbReference type="Pfam" id="PF00907">
    <property type="entry name" value="T-box"/>
    <property type="match status" value="1"/>
</dbReference>
<dbReference type="PRINTS" id="PR00937">
    <property type="entry name" value="TBOX"/>
</dbReference>
<dbReference type="SMART" id="SM00425">
    <property type="entry name" value="TBOX"/>
    <property type="match status" value="1"/>
</dbReference>
<dbReference type="SUPFAM" id="SSF49417">
    <property type="entry name" value="p53-like transcription factors"/>
    <property type="match status" value="1"/>
</dbReference>
<dbReference type="PROSITE" id="PS01283">
    <property type="entry name" value="TBOX_1"/>
    <property type="match status" value="1"/>
</dbReference>
<dbReference type="PROSITE" id="PS01264">
    <property type="entry name" value="TBOX_2"/>
    <property type="match status" value="1"/>
</dbReference>
<dbReference type="PROSITE" id="PS50252">
    <property type="entry name" value="TBOX_3"/>
    <property type="match status" value="1"/>
</dbReference>
<name>TBX1B_XENLA</name>
<reference key="1">
    <citation type="submission" date="2005-11" db="EMBL/GenBank/DDBJ databases">
        <authorList>
            <consortium name="NIH - Xenopus Gene Collection (XGC) project"/>
        </authorList>
    </citation>
    <scope>NUCLEOTIDE SEQUENCE [LARGE SCALE MRNA]</scope>
    <source>
        <tissue>Testis</tissue>
    </source>
</reference>
<proteinExistence type="evidence at transcript level"/>
<organism>
    <name type="scientific">Xenopus laevis</name>
    <name type="common">African clawed frog</name>
    <dbReference type="NCBI Taxonomy" id="8355"/>
    <lineage>
        <taxon>Eukaryota</taxon>
        <taxon>Metazoa</taxon>
        <taxon>Chordata</taxon>
        <taxon>Craniata</taxon>
        <taxon>Vertebrata</taxon>
        <taxon>Euteleostomi</taxon>
        <taxon>Amphibia</taxon>
        <taxon>Batrachia</taxon>
        <taxon>Anura</taxon>
        <taxon>Pipoidea</taxon>
        <taxon>Pipidae</taxon>
        <taxon>Xenopodinae</taxon>
        <taxon>Xenopus</taxon>
        <taxon>Xenopus</taxon>
    </lineage>
</organism>
<accession>Q32NI9</accession>
<evidence type="ECO:0000250" key="1"/>
<evidence type="ECO:0000250" key="2">
    <source>
        <dbReference type="UniProtKB" id="O43435"/>
    </source>
</evidence>
<evidence type="ECO:0000250" key="3">
    <source>
        <dbReference type="UniProtKB" id="P70323"/>
    </source>
</evidence>
<evidence type="ECO:0000255" key="4">
    <source>
        <dbReference type="PROSITE-ProRule" id="PRU00201"/>
    </source>
</evidence>
<evidence type="ECO:0000256" key="5">
    <source>
        <dbReference type="SAM" id="MobiDB-lite"/>
    </source>
</evidence>
<comment type="function">
    <text evidence="1 2 3">Probable transcriptional regulator involved in developmental processes (By similarity). Binds to the palindromic T site 5'-TTCACACCTAGGTGTGAA-3' DNA sequence (By similarity). Induces pre-placodal ectoderm (PPE) gene expression in regions where RIPPLY3 is absent. Plays a role in the formation of the anteroposterior (AP) axis during embryonic development; required to establish the posterolateral border of the pre-placodal ectoderm (PPE) acting downstream of the retinoic acid receptor (RAR) signaling (By similarity).</text>
</comment>
<comment type="function">
    <text evidence="2 3">Probable transcriptional regulator involved in developmental processes (By similarity). Binds to the palindromic T site 5'-TTCACACCTAGGTGTGAA-3' DNA sequence (By similarity). Is required for normal development of the pharyngeal arch arteries (By similarity).</text>
</comment>
<comment type="subunit">
    <text evidence="1 2">Binds DNA as a dimer (By similarity). Interacts with dscr6/ripply3.</text>
</comment>
<comment type="subcellular location">
    <subcellularLocation>
        <location evidence="4">Nucleus</location>
    </subcellularLocation>
</comment>
<comment type="domain">
    <text evidence="1">The C-terminus acts as a transcriptional activation domain.</text>
</comment>
<feature type="chain" id="PRO_0000262461" description="T-box transcription factor TBX1-B">
    <location>
        <begin position="1"/>
        <end position="463"/>
    </location>
</feature>
<feature type="DNA-binding region" description="T-box" evidence="4">
    <location>
        <begin position="119"/>
        <end position="297"/>
    </location>
</feature>
<feature type="region of interest" description="Disordered" evidence="5">
    <location>
        <begin position="39"/>
        <end position="58"/>
    </location>
</feature>
<feature type="region of interest" description="Disordered" evidence="5">
    <location>
        <begin position="75"/>
        <end position="102"/>
    </location>
</feature>
<feature type="region of interest" description="Disordered" evidence="5">
    <location>
        <begin position="320"/>
        <end position="343"/>
    </location>
</feature>
<feature type="region of interest" description="Disordered" evidence="5">
    <location>
        <begin position="367"/>
        <end position="406"/>
    </location>
</feature>
<feature type="short sequence motif" description="Nuclear localization signal" evidence="3">
    <location>
        <begin position="420"/>
        <end position="431"/>
    </location>
</feature>
<feature type="compositionally biased region" description="Low complexity" evidence="5">
    <location>
        <begin position="75"/>
        <end position="96"/>
    </location>
</feature>
<feature type="compositionally biased region" description="Polar residues" evidence="5">
    <location>
        <begin position="323"/>
        <end position="332"/>
    </location>
</feature>
<feature type="compositionally biased region" description="Basic and acidic residues" evidence="5">
    <location>
        <begin position="333"/>
        <end position="343"/>
    </location>
</feature>
<feature type="compositionally biased region" description="Low complexity" evidence="5">
    <location>
        <begin position="367"/>
        <end position="380"/>
    </location>
</feature>